<dbReference type="EC" id="2.3.1.-" evidence="1"/>
<dbReference type="EMBL" id="NKQK01000020">
    <property type="protein sequence ID" value="PSS01277.1"/>
    <property type="molecule type" value="Genomic_DNA"/>
</dbReference>
<dbReference type="SMR" id="A0A2R6Q324"/>
<dbReference type="STRING" id="1590841.A0A2R6Q324"/>
<dbReference type="EnsemblPlants" id="PSS01277">
    <property type="protein sequence ID" value="PSS01277"/>
    <property type="gene ID" value="CEY00_Acc22635"/>
</dbReference>
<dbReference type="Gramene" id="PSS01277">
    <property type="protein sequence ID" value="PSS01277"/>
    <property type="gene ID" value="CEY00_Acc22635"/>
</dbReference>
<dbReference type="InParanoid" id="A0A2R6Q324"/>
<dbReference type="OMA" id="THHEYED"/>
<dbReference type="OrthoDB" id="1483986at2759"/>
<dbReference type="Proteomes" id="UP000241394">
    <property type="component" value="Chromosome LG20"/>
</dbReference>
<dbReference type="GO" id="GO:0016746">
    <property type="term" value="F:acyltransferase activity"/>
    <property type="evidence" value="ECO:0000250"/>
    <property type="project" value="UniProtKB"/>
</dbReference>
<dbReference type="GO" id="GO:0006066">
    <property type="term" value="P:alcohol metabolic process"/>
    <property type="evidence" value="ECO:0000250"/>
    <property type="project" value="UniProtKB"/>
</dbReference>
<dbReference type="GO" id="GO:0009836">
    <property type="term" value="P:fruit ripening, climacteric"/>
    <property type="evidence" value="ECO:0000250"/>
    <property type="project" value="UniProtKB"/>
</dbReference>
<dbReference type="GO" id="GO:0009723">
    <property type="term" value="P:response to ethylene"/>
    <property type="evidence" value="ECO:0000250"/>
    <property type="project" value="UniProtKB"/>
</dbReference>
<dbReference type="Gene3D" id="3.30.559.10">
    <property type="entry name" value="Chloramphenicol acetyltransferase-like domain"/>
    <property type="match status" value="2"/>
</dbReference>
<dbReference type="InterPro" id="IPR023213">
    <property type="entry name" value="CAT-like_dom_sf"/>
</dbReference>
<dbReference type="InterPro" id="IPR050898">
    <property type="entry name" value="Plant_acyltransferase"/>
</dbReference>
<dbReference type="PANTHER" id="PTHR31147">
    <property type="entry name" value="ACYL TRANSFERASE 4"/>
    <property type="match status" value="1"/>
</dbReference>
<dbReference type="PANTHER" id="PTHR31147:SF66">
    <property type="entry name" value="OS05G0315700 PROTEIN"/>
    <property type="match status" value="1"/>
</dbReference>
<dbReference type="Pfam" id="PF02458">
    <property type="entry name" value="Transferase"/>
    <property type="match status" value="1"/>
</dbReference>
<evidence type="ECO:0000250" key="1">
    <source>
        <dbReference type="UniProtKB" id="A0A068BIF1"/>
    </source>
</evidence>
<evidence type="ECO:0000250" key="2">
    <source>
        <dbReference type="UniProtKB" id="Q9FI78"/>
    </source>
</evidence>
<evidence type="ECO:0000305" key="3"/>
<evidence type="ECO:0000312" key="4">
    <source>
        <dbReference type="EMBL" id="PSS01277.1"/>
    </source>
</evidence>
<reference key="1">
    <citation type="journal article" date="2018" name="BMC Genomics">
        <title>A manually annotated Actinidia chinensis var. chinensis (kiwifruit) genome highlights the challenges associated with draft genomes and gene prediction in plants.</title>
        <authorList>
            <person name="Pilkington S.M."/>
            <person name="Crowhurst R."/>
            <person name="Hilario E."/>
            <person name="Nardozza S."/>
            <person name="Fraser L."/>
            <person name="Peng Y."/>
            <person name="Gunaseelan K."/>
            <person name="Simpson R."/>
            <person name="Tahir J."/>
            <person name="Deroles S.C."/>
            <person name="Templeton K."/>
            <person name="Luo Z."/>
            <person name="Davy M."/>
            <person name="Cheng C."/>
            <person name="McNeilage M."/>
            <person name="Scaglione D."/>
            <person name="Liu Y."/>
            <person name="Zhang Q."/>
            <person name="Datson P."/>
            <person name="De Silva N."/>
            <person name="Gardiner S.E."/>
            <person name="Bassett H."/>
            <person name="Chagne D."/>
            <person name="McCallum J."/>
            <person name="Dzierzon H."/>
            <person name="Deng C."/>
            <person name="Wang Y.Y."/>
            <person name="Barron L."/>
            <person name="Manako K."/>
            <person name="Bowen J."/>
            <person name="Foster T.M."/>
            <person name="Erridge Z.A."/>
            <person name="Tiffin H."/>
            <person name="Waite C.N."/>
            <person name="Davies K.M."/>
            <person name="Grierson E.P."/>
            <person name="Laing W.A."/>
            <person name="Kirk R."/>
            <person name="Chen X."/>
            <person name="Wood M."/>
            <person name="Montefiori M."/>
            <person name="Brummell D.A."/>
            <person name="Schwinn K.E."/>
            <person name="Catanach A."/>
            <person name="Fullerton C."/>
            <person name="Li D."/>
            <person name="Meiyalaghan S."/>
            <person name="Nieuwenhuizen N."/>
            <person name="Read N."/>
            <person name="Prakash R."/>
            <person name="Hunter D."/>
            <person name="Zhang H."/>
            <person name="McKenzie M."/>
            <person name="Knabel M."/>
            <person name="Harris A."/>
            <person name="Allan A.C."/>
            <person name="Gleave A."/>
            <person name="Chen A."/>
            <person name="Janssen B.J."/>
            <person name="Plunkett B."/>
            <person name="Ampomah-Dwamena C."/>
            <person name="Voogd C."/>
            <person name="Leif D."/>
            <person name="Lafferty D."/>
            <person name="Souleyre E.J.F."/>
            <person name="Varkonyi-Gasic E."/>
            <person name="Gambi F."/>
            <person name="Hanley J."/>
            <person name="Yao J.L."/>
            <person name="Cheung J."/>
            <person name="David K.M."/>
            <person name="Warren B."/>
            <person name="Marsh K."/>
            <person name="Snowden K.C."/>
            <person name="Lin-Wang K."/>
            <person name="Brian L."/>
            <person name="Martinez-Sanchez M."/>
            <person name="Wang M."/>
            <person name="Ileperuma N."/>
            <person name="Macnee N."/>
            <person name="Campin R."/>
            <person name="McAtee P."/>
            <person name="Drummond R.S.M."/>
            <person name="Espley R.V."/>
            <person name="Ireland H.S."/>
            <person name="Wu R."/>
            <person name="Atkinson R.G."/>
            <person name="Karunairetnam S."/>
            <person name="Bulley S."/>
            <person name="Chunkath S."/>
            <person name="Hanley Z."/>
            <person name="Storey R."/>
            <person name="Thrimawithana A.H."/>
            <person name="Thomson S."/>
            <person name="David C."/>
            <person name="Testolin R."/>
            <person name="Huang H."/>
            <person name="Hellens R.P."/>
            <person name="Schaffer R.J."/>
        </authorList>
    </citation>
    <scope>NUCLEOTIDE SEQUENCE [LARGE SCALE GENOMIC DNA]</scope>
    <source>
        <strain>cv. Red5</strain>
        <tissue>Leaf</tissue>
    </source>
</reference>
<organism>
    <name type="scientific">Actinidia chinensis var. chinensis</name>
    <name type="common">Chinese soft-hair kiwi</name>
    <dbReference type="NCBI Taxonomy" id="1590841"/>
    <lineage>
        <taxon>Eukaryota</taxon>
        <taxon>Viridiplantae</taxon>
        <taxon>Streptophyta</taxon>
        <taxon>Embryophyta</taxon>
        <taxon>Tracheophyta</taxon>
        <taxon>Spermatophyta</taxon>
        <taxon>Magnoliopsida</taxon>
        <taxon>eudicotyledons</taxon>
        <taxon>Gunneridae</taxon>
        <taxon>Pentapetalae</taxon>
        <taxon>asterids</taxon>
        <taxon>Ericales</taxon>
        <taxon>Actinidiaceae</taxon>
        <taxon>Actinidia</taxon>
    </lineage>
</organism>
<proteinExistence type="inferred from homology"/>
<accession>A0A2R6Q324</accession>
<comment type="function">
    <text evidence="1">Involved in the biosynthesis of volatile esters which confer kiwifruit flavor (By similarity). Alcohol acyl transferase that can use a wide range of alcohols as substrate to produce esters (By similarity).</text>
</comment>
<comment type="similarity">
    <text evidence="3">Belongs to the plant acyltransferase family.</text>
</comment>
<keyword id="KW-0012">Acyltransferase</keyword>
<keyword id="KW-1185">Reference proteome</keyword>
<keyword id="KW-0808">Transferase</keyword>
<name>AT1_ACTCC</name>
<gene>
    <name evidence="3" type="primary">AT1</name>
    <name evidence="4" type="ORF">CEY00_Acc22635</name>
</gene>
<sequence length="456" mass="50915">MASFPPSLVFTVRRKEPTLVLPSKPTPRELKQLSDIDDQEGLRFQVPVIMFYKRKLSMEGEDPVKVIREALAEALAFYYPFAGRLIEGPNRKLMVDCTSEGVLFIEADADIELNQLIGDTIDPGTYLDELLHDVPGSEGILGCPLLLIQVTRFRCGGWAFAIRLNHTMSDTLGLVQFLTTIAEFTRGAEGAPSVPPVWQREFLAARQPPFIPFHHHEYEQVIDTTPDDNKKSMTHKSFFFGPKEIRAIRSHLPLHHRSTSSTFDVLTACLWRCRTCALVLDPKKTVRISCAASGRGKHDLHVPRGYYGNVSAFPATVLRAGMISTSPLEYAMEGVKKAKAKMTGEYLRSVADLMVTKGRPLYTVVGNYIVSDMTRVGLDTIDFGWGKPVYGGPARAFPLISFYGRFKDNKGEDGIVVLICLPEAAMETFQEELKKMIGEHVDGPFDYNPIKVVSKL</sequence>
<protein>
    <recommendedName>
        <fullName evidence="3">Alcohol acyltransferase 1</fullName>
        <shortName evidence="3">AcAT1</shortName>
        <ecNumber evidence="1">2.3.1.-</ecNumber>
    </recommendedName>
</protein>
<feature type="chain" id="PRO_0000451701" description="Alcohol acyltransferase 1">
    <location>
        <begin position="1"/>
        <end position="456"/>
    </location>
</feature>
<feature type="active site" description="Proton acceptor" evidence="2">
    <location>
        <position position="166"/>
    </location>
</feature>
<feature type="active site" description="Proton acceptor" evidence="2">
    <location>
        <position position="382"/>
    </location>
</feature>